<reference key="1">
    <citation type="journal article" date="2001" name="Lancet">
        <title>Whole genome sequencing of meticillin-resistant Staphylococcus aureus.</title>
        <authorList>
            <person name="Kuroda M."/>
            <person name="Ohta T."/>
            <person name="Uchiyama I."/>
            <person name="Baba T."/>
            <person name="Yuzawa H."/>
            <person name="Kobayashi I."/>
            <person name="Cui L."/>
            <person name="Oguchi A."/>
            <person name="Aoki K."/>
            <person name="Nagai Y."/>
            <person name="Lian J.-Q."/>
            <person name="Ito T."/>
            <person name="Kanamori M."/>
            <person name="Matsumaru H."/>
            <person name="Maruyama A."/>
            <person name="Murakami H."/>
            <person name="Hosoyama A."/>
            <person name="Mizutani-Ui Y."/>
            <person name="Takahashi N.K."/>
            <person name="Sawano T."/>
            <person name="Inoue R."/>
            <person name="Kaito C."/>
            <person name="Sekimizu K."/>
            <person name="Hirakawa H."/>
            <person name="Kuhara S."/>
            <person name="Goto S."/>
            <person name="Yabuzaki J."/>
            <person name="Kanehisa M."/>
            <person name="Yamashita A."/>
            <person name="Oshima K."/>
            <person name="Furuya K."/>
            <person name="Yoshino C."/>
            <person name="Shiba T."/>
            <person name="Hattori M."/>
            <person name="Ogasawara N."/>
            <person name="Hayashi H."/>
            <person name="Hiramatsu K."/>
        </authorList>
    </citation>
    <scope>NUCLEOTIDE SEQUENCE [LARGE SCALE GENOMIC DNA]</scope>
    <source>
        <strain>Mu50 / ATCC 700699</strain>
    </source>
</reference>
<comment type="function">
    <text evidence="1">Binds human plasma haptoglobin-hemoglobin complexes, haptoglobin and hemoglobin. Binds haptoglobin-hemoglobin complexes with significantly higher affinity than haptoglobin alone (By similarity).</text>
</comment>
<comment type="subcellular location">
    <subcellularLocation>
        <location evidence="6">Secreted</location>
        <location evidence="6">Cell wall</location>
        <topology evidence="6">Peptidoglycan-anchor</topology>
    </subcellularLocation>
</comment>
<comment type="domain">
    <text evidence="1">The NEAT 1 domain binds with higher affinity than the NEAT 2 domain haptoglobin-hemoglobin complexes, haptoglobin and hemoglobin.</text>
</comment>
<comment type="similarity">
    <text evidence="6">Belongs to the IsdH family.</text>
</comment>
<sequence>MNKHHPKLRSFYSIRKSTLGVASVIVSTLFLITSQHQAQAAENTNTSDKISENQNNNATTTQQPKDTNQTQPATQPVITAKNYPAADESLKDAIKDPALENKEHDIGPREQVNFQLLDKNNETQYYHFFSIKDPADVYYTKKKAEVELDINTASTWKKFEVYENNQKLPVRLVSYSPVPEDHAYIRFPVSDGTQELKIVSSTQIDDGEETNYDYTKLVFAKPIYNDPSLVKSDTNDAVVTNDQSSSDASNQTNTNTSNQNTSTTNNANNQPQATTNMSQPAQPKSSANADQASSQPAHETNSNGNTNDKTNESSNQSDVNQQYPPADESLQDAIKNPAIIDKEHTADNWRPIDFQMKNDKGERQFYHYASTVEPATVIFTKTGPVIELGLKTASTWKKFEVYEGDKKLPVELVSYDSDKDYAYIRFPVSNGTRDVKIVSSIEYGENIHEDYDYTLMVFAQPITNNPDDYVDEETYNLQKLLAPYHKAKTLERQVYELEKLQEKLPEKYKAEYKKKLDQTRVELADQVKSAVTEFENVTPTNDQLTDLQEAHFVVFESEENSESVMDGFVEHPFYTATLNGQKYVVMKTKDDSYWKDLIVEGKRVTTVSKDPKNNSRTLIFPYIPDKAVYNAIVKVVVANIGYEGQYHVRIINQDINTKDDDTSQNNTSEPLNVQTGQEGKVADTDVAENSSTATNPKDASDKADVIEPESDVVKDADNNIDKDVQHDVDHLSDMSDNNHFDKYDLKEMDTQIAKDTDRNVDNSVGMSSNVDTDKDSNKNKDKVIQLAHIADKNNHTGKAAKLDVVKQNYNNTDKVTDKKTTEHLPSDIHKTVDKTVKTKEKAGTPSKENKLSQSKMLPKTGETTSSQSWWGLYALLGMLALFIPKFRKESK</sequence>
<gene>
    <name type="primary">isdH</name>
    <name type="synonym">harA</name>
    <name type="synonym">sasI</name>
    <name type="ordered locus">SAV1731</name>
</gene>
<accession>Q931P4</accession>
<feature type="signal peptide" evidence="2">
    <location>
        <begin position="1"/>
        <end position="40"/>
    </location>
</feature>
<feature type="chain" id="PRO_0000285187" description="Iron-regulated surface determinant protein H">
    <location>
        <begin position="41"/>
        <end position="860"/>
    </location>
</feature>
<feature type="propeptide" id="PRO_0000285188" description="Removed by sortase" evidence="4">
    <location>
        <begin position="861"/>
        <end position="891"/>
    </location>
</feature>
<feature type="domain" description="NEAT 1" evidence="3">
    <location>
        <begin position="105"/>
        <end position="232"/>
    </location>
</feature>
<feature type="domain" description="NEAT 2" evidence="3">
    <location>
        <begin position="345"/>
        <end position="471"/>
    </location>
</feature>
<feature type="domain" description="NEAT 3" evidence="3">
    <location>
        <begin position="543"/>
        <end position="660"/>
    </location>
</feature>
<feature type="region of interest" description="Disordered" evidence="5">
    <location>
        <begin position="42"/>
        <end position="77"/>
    </location>
</feature>
<feature type="region of interest" description="Disordered" evidence="5">
    <location>
        <begin position="239"/>
        <end position="324"/>
    </location>
</feature>
<feature type="region of interest" description="Disordered" evidence="5">
    <location>
        <begin position="657"/>
        <end position="718"/>
    </location>
</feature>
<feature type="region of interest" description="Disordered" evidence="5">
    <location>
        <begin position="752"/>
        <end position="777"/>
    </location>
</feature>
<feature type="region of interest" description="Disordered" evidence="5">
    <location>
        <begin position="835"/>
        <end position="864"/>
    </location>
</feature>
<feature type="short sequence motif" description="LPXTG sorting signal" evidence="2">
    <location>
        <begin position="857"/>
        <end position="861"/>
    </location>
</feature>
<feature type="compositionally biased region" description="Low complexity" evidence="5">
    <location>
        <begin position="53"/>
        <end position="63"/>
    </location>
</feature>
<feature type="compositionally biased region" description="Polar residues" evidence="5">
    <location>
        <begin position="64"/>
        <end position="77"/>
    </location>
</feature>
<feature type="compositionally biased region" description="Low complexity" evidence="5">
    <location>
        <begin position="240"/>
        <end position="276"/>
    </location>
</feature>
<feature type="compositionally biased region" description="Polar residues" evidence="5">
    <location>
        <begin position="277"/>
        <end position="323"/>
    </location>
</feature>
<feature type="compositionally biased region" description="Polar residues" evidence="5">
    <location>
        <begin position="663"/>
        <end position="677"/>
    </location>
</feature>
<feature type="compositionally biased region" description="Polar residues" evidence="5">
    <location>
        <begin position="687"/>
        <end position="697"/>
    </location>
</feature>
<feature type="compositionally biased region" description="Basic and acidic residues" evidence="5">
    <location>
        <begin position="698"/>
        <end position="718"/>
    </location>
</feature>
<feature type="compositionally biased region" description="Basic and acidic residues" evidence="5">
    <location>
        <begin position="835"/>
        <end position="850"/>
    </location>
</feature>
<feature type="compositionally biased region" description="Polar residues" evidence="5">
    <location>
        <begin position="851"/>
        <end position="864"/>
    </location>
</feature>
<feature type="modified residue" description="Pentaglycyl murein peptidoglycan amidated threonine" evidence="4">
    <location>
        <position position="860"/>
    </location>
</feature>
<feature type="helix" evidence="8">
    <location>
        <begin position="477"/>
        <end position="480"/>
    </location>
</feature>
<feature type="helix" evidence="8">
    <location>
        <begin position="482"/>
        <end position="486"/>
    </location>
</feature>
<feature type="helix" evidence="8">
    <location>
        <begin position="490"/>
        <end position="500"/>
    </location>
</feature>
<feature type="helix" evidence="8">
    <location>
        <begin position="501"/>
        <end position="503"/>
    </location>
</feature>
<feature type="helix" evidence="8">
    <location>
        <begin position="506"/>
        <end position="508"/>
    </location>
</feature>
<feature type="helix" evidence="8">
    <location>
        <begin position="509"/>
        <end position="533"/>
    </location>
</feature>
<feature type="turn" evidence="8">
    <location>
        <begin position="534"/>
        <end position="536"/>
    </location>
</feature>
<feature type="strand" evidence="7">
    <location>
        <begin position="545"/>
        <end position="550"/>
    </location>
</feature>
<feature type="strand" evidence="7">
    <location>
        <begin position="552"/>
        <end position="562"/>
    </location>
</feature>
<feature type="helix" evidence="7">
    <location>
        <begin position="564"/>
        <end position="567"/>
    </location>
</feature>
<feature type="strand" evidence="7">
    <location>
        <begin position="571"/>
        <end position="578"/>
    </location>
</feature>
<feature type="strand" evidence="7">
    <location>
        <begin position="581"/>
        <end position="590"/>
    </location>
</feature>
<feature type="helix" evidence="7">
    <location>
        <begin position="591"/>
        <end position="593"/>
    </location>
</feature>
<feature type="strand" evidence="7">
    <location>
        <begin position="594"/>
        <end position="599"/>
    </location>
</feature>
<feature type="strand" evidence="7">
    <location>
        <begin position="605"/>
        <end position="610"/>
    </location>
</feature>
<feature type="helix" evidence="7">
    <location>
        <begin position="611"/>
        <end position="613"/>
    </location>
</feature>
<feature type="strand" evidence="7">
    <location>
        <begin position="615"/>
        <end position="621"/>
    </location>
</feature>
<feature type="strand" evidence="7">
    <location>
        <begin position="628"/>
        <end position="637"/>
    </location>
</feature>
<feature type="helix" evidence="7">
    <location>
        <begin position="638"/>
        <end position="640"/>
    </location>
</feature>
<feature type="strand" evidence="7">
    <location>
        <begin position="642"/>
        <end position="652"/>
    </location>
</feature>
<dbReference type="EMBL" id="BA000017">
    <property type="protein sequence ID" value="BAB57893.1"/>
    <property type="molecule type" value="Genomic_DNA"/>
</dbReference>
<dbReference type="RefSeq" id="WP_001032804.1">
    <property type="nucleotide sequence ID" value="NC_002758.2"/>
</dbReference>
<dbReference type="PDB" id="2E7D">
    <property type="method" value="X-ray"/>
    <property type="resolution" value="2.20 A"/>
    <property type="chains" value="A/B=539-664"/>
</dbReference>
<dbReference type="PDB" id="2Z6F">
    <property type="method" value="X-ray"/>
    <property type="resolution" value="1.90 A"/>
    <property type="chains" value="A=539-664"/>
</dbReference>
<dbReference type="PDB" id="3QUG">
    <property type="method" value="X-ray"/>
    <property type="resolution" value="1.70 A"/>
    <property type="chains" value="A/B=539-664"/>
</dbReference>
<dbReference type="PDB" id="3QUH">
    <property type="method" value="X-ray"/>
    <property type="resolution" value="2.70 A"/>
    <property type="chains" value="A/B=539-664"/>
</dbReference>
<dbReference type="PDB" id="3VTM">
    <property type="method" value="X-ray"/>
    <property type="resolution" value="2.80 A"/>
    <property type="chains" value="A/B=543-655"/>
</dbReference>
<dbReference type="PDB" id="3VUA">
    <property type="method" value="X-ray"/>
    <property type="resolution" value="1.85 A"/>
    <property type="chains" value="A/B/C/D/E/F=539-664"/>
</dbReference>
<dbReference type="PDB" id="7W81">
    <property type="method" value="X-ray"/>
    <property type="resolution" value="1.80 A"/>
    <property type="chains" value="A/B=476-656"/>
</dbReference>
<dbReference type="PDBsum" id="2E7D"/>
<dbReference type="PDBsum" id="2Z6F"/>
<dbReference type="PDBsum" id="3QUG"/>
<dbReference type="PDBsum" id="3QUH"/>
<dbReference type="PDBsum" id="3VTM"/>
<dbReference type="PDBsum" id="3VUA"/>
<dbReference type="PDBsum" id="7W81"/>
<dbReference type="SMR" id="Q931P4"/>
<dbReference type="TCDB" id="9.A.39.1.2">
    <property type="family name" value="the gram-positive bacterial hemoglobin receptor (isd) family"/>
</dbReference>
<dbReference type="KEGG" id="sav:SAV1731"/>
<dbReference type="HOGENOM" id="CLU_016167_1_0_9"/>
<dbReference type="EvolutionaryTrace" id="Q931P4"/>
<dbReference type="Proteomes" id="UP000002481">
    <property type="component" value="Chromosome"/>
</dbReference>
<dbReference type="GO" id="GO:0005576">
    <property type="term" value="C:extracellular region"/>
    <property type="evidence" value="ECO:0007669"/>
    <property type="project" value="UniProtKB-KW"/>
</dbReference>
<dbReference type="GO" id="GO:0020037">
    <property type="term" value="F:heme binding"/>
    <property type="evidence" value="ECO:0007669"/>
    <property type="project" value="InterPro"/>
</dbReference>
<dbReference type="CDD" id="cd06920">
    <property type="entry name" value="NEAT"/>
    <property type="match status" value="1"/>
</dbReference>
<dbReference type="Gene3D" id="1.20.58.1270">
    <property type="match status" value="1"/>
</dbReference>
<dbReference type="Gene3D" id="2.60.40.1850">
    <property type="match status" value="3"/>
</dbReference>
<dbReference type="InterPro" id="IPR048652">
    <property type="entry name" value="Isd_H_B_linker"/>
</dbReference>
<dbReference type="InterPro" id="IPR050436">
    <property type="entry name" value="IsdA"/>
</dbReference>
<dbReference type="InterPro" id="IPR019930">
    <property type="entry name" value="IsdH"/>
</dbReference>
<dbReference type="InterPro" id="IPR019931">
    <property type="entry name" value="LPXTG_anchor"/>
</dbReference>
<dbReference type="InterPro" id="IPR006635">
    <property type="entry name" value="NEAT_dom"/>
</dbReference>
<dbReference type="InterPro" id="IPR037250">
    <property type="entry name" value="NEAT_dom_sf"/>
</dbReference>
<dbReference type="InterPro" id="IPR005877">
    <property type="entry name" value="YSIRK_signal_dom"/>
</dbReference>
<dbReference type="NCBIfam" id="TIGR03658">
    <property type="entry name" value="IsdH_HarA"/>
    <property type="match status" value="1"/>
</dbReference>
<dbReference type="NCBIfam" id="TIGR01167">
    <property type="entry name" value="LPXTG_anchor"/>
    <property type="match status" value="1"/>
</dbReference>
<dbReference type="NCBIfam" id="TIGR01168">
    <property type="entry name" value="YSIRK_signal"/>
    <property type="match status" value="1"/>
</dbReference>
<dbReference type="PANTHER" id="PTHR37824">
    <property type="entry name" value="IRON-REGULATED SURFACE DETERMINANT PROTEIN C"/>
    <property type="match status" value="1"/>
</dbReference>
<dbReference type="PANTHER" id="PTHR37824:SF1">
    <property type="entry name" value="IRON-REGULATED SURFACE DETERMINANT PROTEIN C"/>
    <property type="match status" value="1"/>
</dbReference>
<dbReference type="Pfam" id="PF20861">
    <property type="entry name" value="Isd_H_B_linker"/>
    <property type="match status" value="1"/>
</dbReference>
<dbReference type="Pfam" id="PF05031">
    <property type="entry name" value="NEAT"/>
    <property type="match status" value="3"/>
</dbReference>
<dbReference type="Pfam" id="PF04650">
    <property type="entry name" value="YSIRK_signal"/>
    <property type="match status" value="1"/>
</dbReference>
<dbReference type="SMART" id="SM00725">
    <property type="entry name" value="NEAT"/>
    <property type="match status" value="3"/>
</dbReference>
<dbReference type="SUPFAM" id="SSF158911">
    <property type="entry name" value="NEAT domain-like"/>
    <property type="match status" value="3"/>
</dbReference>
<dbReference type="PROSITE" id="PS50847">
    <property type="entry name" value="GRAM_POS_ANCHORING"/>
    <property type="match status" value="1"/>
</dbReference>
<dbReference type="PROSITE" id="PS50978">
    <property type="entry name" value="NEAT"/>
    <property type="match status" value="3"/>
</dbReference>
<organism>
    <name type="scientific">Staphylococcus aureus (strain Mu50 / ATCC 700699)</name>
    <dbReference type="NCBI Taxonomy" id="158878"/>
    <lineage>
        <taxon>Bacteria</taxon>
        <taxon>Bacillati</taxon>
        <taxon>Bacillota</taxon>
        <taxon>Bacilli</taxon>
        <taxon>Bacillales</taxon>
        <taxon>Staphylococcaceae</taxon>
        <taxon>Staphylococcus</taxon>
    </lineage>
</organism>
<proteinExistence type="evidence at protein level"/>
<protein>
    <recommendedName>
        <fullName>Iron-regulated surface determinant protein H</fullName>
    </recommendedName>
    <alternativeName>
        <fullName>Haptoglobin receptor A</fullName>
    </alternativeName>
    <alternativeName>
        <fullName>Staphylococcus aureus surface protein I</fullName>
    </alternativeName>
</protein>
<keyword id="KW-0002">3D-structure</keyword>
<keyword id="KW-0134">Cell wall</keyword>
<keyword id="KW-0572">Peptidoglycan-anchor</keyword>
<keyword id="KW-0677">Repeat</keyword>
<keyword id="KW-0964">Secreted</keyword>
<keyword id="KW-0732">Signal</keyword>
<evidence type="ECO:0000250" key="1"/>
<evidence type="ECO:0000255" key="2"/>
<evidence type="ECO:0000255" key="3">
    <source>
        <dbReference type="PROSITE-ProRule" id="PRU00337"/>
    </source>
</evidence>
<evidence type="ECO:0000255" key="4">
    <source>
        <dbReference type="PROSITE-ProRule" id="PRU00477"/>
    </source>
</evidence>
<evidence type="ECO:0000256" key="5">
    <source>
        <dbReference type="SAM" id="MobiDB-lite"/>
    </source>
</evidence>
<evidence type="ECO:0000305" key="6"/>
<evidence type="ECO:0007829" key="7">
    <source>
        <dbReference type="PDB" id="3QUG"/>
    </source>
</evidence>
<evidence type="ECO:0007829" key="8">
    <source>
        <dbReference type="PDB" id="7W81"/>
    </source>
</evidence>
<name>ISDH_STAAM</name>